<dbReference type="EMBL" id="AE017198">
    <property type="protein sequence ID" value="AAS08337.1"/>
    <property type="molecule type" value="Genomic_DNA"/>
</dbReference>
<dbReference type="RefSeq" id="WP_004895859.1">
    <property type="nucleotide sequence ID" value="NC_005362.1"/>
</dbReference>
<dbReference type="SMR" id="Q74L78"/>
<dbReference type="GeneID" id="83569766"/>
<dbReference type="KEGG" id="ljo:LJ_0350"/>
<dbReference type="eggNOG" id="COG0094">
    <property type="taxonomic scope" value="Bacteria"/>
</dbReference>
<dbReference type="HOGENOM" id="CLU_061015_2_1_9"/>
<dbReference type="Proteomes" id="UP000000581">
    <property type="component" value="Chromosome"/>
</dbReference>
<dbReference type="GO" id="GO:1990904">
    <property type="term" value="C:ribonucleoprotein complex"/>
    <property type="evidence" value="ECO:0007669"/>
    <property type="project" value="UniProtKB-KW"/>
</dbReference>
<dbReference type="GO" id="GO:0005840">
    <property type="term" value="C:ribosome"/>
    <property type="evidence" value="ECO:0007669"/>
    <property type="project" value="UniProtKB-KW"/>
</dbReference>
<dbReference type="GO" id="GO:0019843">
    <property type="term" value="F:rRNA binding"/>
    <property type="evidence" value="ECO:0007669"/>
    <property type="project" value="UniProtKB-UniRule"/>
</dbReference>
<dbReference type="GO" id="GO:0003735">
    <property type="term" value="F:structural constituent of ribosome"/>
    <property type="evidence" value="ECO:0007669"/>
    <property type="project" value="InterPro"/>
</dbReference>
<dbReference type="GO" id="GO:0000049">
    <property type="term" value="F:tRNA binding"/>
    <property type="evidence" value="ECO:0007669"/>
    <property type="project" value="UniProtKB-UniRule"/>
</dbReference>
<dbReference type="GO" id="GO:0006412">
    <property type="term" value="P:translation"/>
    <property type="evidence" value="ECO:0007669"/>
    <property type="project" value="UniProtKB-UniRule"/>
</dbReference>
<dbReference type="FunFam" id="3.30.1440.10:FF:000001">
    <property type="entry name" value="50S ribosomal protein L5"/>
    <property type="match status" value="1"/>
</dbReference>
<dbReference type="Gene3D" id="3.30.1440.10">
    <property type="match status" value="1"/>
</dbReference>
<dbReference type="HAMAP" id="MF_01333_B">
    <property type="entry name" value="Ribosomal_uL5_B"/>
    <property type="match status" value="1"/>
</dbReference>
<dbReference type="InterPro" id="IPR002132">
    <property type="entry name" value="Ribosomal_uL5"/>
</dbReference>
<dbReference type="InterPro" id="IPR020930">
    <property type="entry name" value="Ribosomal_uL5_bac-type"/>
</dbReference>
<dbReference type="InterPro" id="IPR031309">
    <property type="entry name" value="Ribosomal_uL5_C"/>
</dbReference>
<dbReference type="InterPro" id="IPR020929">
    <property type="entry name" value="Ribosomal_uL5_CS"/>
</dbReference>
<dbReference type="InterPro" id="IPR022803">
    <property type="entry name" value="Ribosomal_uL5_dom_sf"/>
</dbReference>
<dbReference type="InterPro" id="IPR031310">
    <property type="entry name" value="Ribosomal_uL5_N"/>
</dbReference>
<dbReference type="NCBIfam" id="NF000585">
    <property type="entry name" value="PRK00010.1"/>
    <property type="match status" value="1"/>
</dbReference>
<dbReference type="PANTHER" id="PTHR11994">
    <property type="entry name" value="60S RIBOSOMAL PROTEIN L11-RELATED"/>
    <property type="match status" value="1"/>
</dbReference>
<dbReference type="Pfam" id="PF00281">
    <property type="entry name" value="Ribosomal_L5"/>
    <property type="match status" value="1"/>
</dbReference>
<dbReference type="Pfam" id="PF00673">
    <property type="entry name" value="Ribosomal_L5_C"/>
    <property type="match status" value="1"/>
</dbReference>
<dbReference type="PIRSF" id="PIRSF002161">
    <property type="entry name" value="Ribosomal_L5"/>
    <property type="match status" value="1"/>
</dbReference>
<dbReference type="SUPFAM" id="SSF55282">
    <property type="entry name" value="RL5-like"/>
    <property type="match status" value="1"/>
</dbReference>
<dbReference type="PROSITE" id="PS00358">
    <property type="entry name" value="RIBOSOMAL_L5"/>
    <property type="match status" value="1"/>
</dbReference>
<keyword id="KW-0687">Ribonucleoprotein</keyword>
<keyword id="KW-0689">Ribosomal protein</keyword>
<keyword id="KW-0694">RNA-binding</keyword>
<keyword id="KW-0699">rRNA-binding</keyword>
<keyword id="KW-0820">tRNA-binding</keyword>
<protein>
    <recommendedName>
        <fullName evidence="1">Large ribosomal subunit protein uL5</fullName>
    </recommendedName>
    <alternativeName>
        <fullName evidence="2">50S ribosomal protein L5</fullName>
    </alternativeName>
</protein>
<name>RL5_LACJO</name>
<gene>
    <name evidence="1" type="primary">rplE</name>
    <name type="ordered locus">LJ_0350</name>
</gene>
<proteinExistence type="inferred from homology"/>
<comment type="function">
    <text evidence="1">This is one of the proteins that bind and probably mediate the attachment of the 5S RNA into the large ribosomal subunit, where it forms part of the central protuberance. In the 70S ribosome it contacts protein S13 of the 30S subunit (bridge B1b), connecting the 2 subunits; this bridge is implicated in subunit movement. Contacts the P site tRNA; the 5S rRNA and some of its associated proteins might help stabilize positioning of ribosome-bound tRNAs.</text>
</comment>
<comment type="subunit">
    <text evidence="1">Part of the 50S ribosomal subunit; part of the 5S rRNA/L5/L18/L25 subcomplex. Contacts the 5S rRNA and the P site tRNA. Forms a bridge to the 30S subunit in the 70S ribosome.</text>
</comment>
<comment type="similarity">
    <text evidence="1">Belongs to the universal ribosomal protein uL5 family.</text>
</comment>
<sequence>MANSLVEKYSNEIAPAMNKKFNYDSVMEIPKIDKIVLNMGVGDAVSNAKNLDEAVEELTLISGQKPLITKAKKSIANFRLREGMSIGAKVTLRGDRMYDFLYKLINVSLPRVRDFRGISSRSFDGRGNYTLGIKEQLIFPEIDYDKVNRVRGLDVVIVTTAKTDEEARELLTEFGMPFAK</sequence>
<evidence type="ECO:0000255" key="1">
    <source>
        <dbReference type="HAMAP-Rule" id="MF_01333"/>
    </source>
</evidence>
<evidence type="ECO:0000305" key="2"/>
<organism>
    <name type="scientific">Lactobacillus johnsonii (strain CNCM I-12250 / La1 / NCC 533)</name>
    <dbReference type="NCBI Taxonomy" id="257314"/>
    <lineage>
        <taxon>Bacteria</taxon>
        <taxon>Bacillati</taxon>
        <taxon>Bacillota</taxon>
        <taxon>Bacilli</taxon>
        <taxon>Lactobacillales</taxon>
        <taxon>Lactobacillaceae</taxon>
        <taxon>Lactobacillus</taxon>
    </lineage>
</organism>
<feature type="chain" id="PRO_0000124937" description="Large ribosomal subunit protein uL5">
    <location>
        <begin position="1"/>
        <end position="180"/>
    </location>
</feature>
<accession>Q74L78</accession>
<reference key="1">
    <citation type="journal article" date="2004" name="Proc. Natl. Acad. Sci. U.S.A.">
        <title>The genome sequence of the probiotic intestinal bacterium Lactobacillus johnsonii NCC 533.</title>
        <authorList>
            <person name="Pridmore R.D."/>
            <person name="Berger B."/>
            <person name="Desiere F."/>
            <person name="Vilanova D."/>
            <person name="Barretto C."/>
            <person name="Pittet A.-C."/>
            <person name="Zwahlen M.-C."/>
            <person name="Rouvet M."/>
            <person name="Altermann E."/>
            <person name="Barrangou R."/>
            <person name="Mollet B."/>
            <person name="Mercenier A."/>
            <person name="Klaenhammer T."/>
            <person name="Arigoni F."/>
            <person name="Schell M.A."/>
        </authorList>
    </citation>
    <scope>NUCLEOTIDE SEQUENCE [LARGE SCALE GENOMIC DNA]</scope>
    <source>
        <strain>CNCM I-1225 / La1 / NCC 533</strain>
    </source>
</reference>